<evidence type="ECO:0000256" key="1">
    <source>
        <dbReference type="SAM" id="MobiDB-lite"/>
    </source>
</evidence>
<evidence type="ECO:0000269" key="2">
    <source>
    </source>
</evidence>
<evidence type="ECO:0000303" key="3">
    <source>
    </source>
</evidence>
<evidence type="ECO:0000303" key="4">
    <source ref="2"/>
</evidence>
<evidence type="ECO:0000305" key="5"/>
<evidence type="ECO:0000312" key="6">
    <source>
        <dbReference type="ZFIN" id="ZDB-GENE-000511-4"/>
    </source>
</evidence>
<evidence type="ECO:0007744" key="7">
    <source>
        <dbReference type="PDB" id="7OYA"/>
    </source>
</evidence>
<evidence type="ECO:0007744" key="8">
    <source>
        <dbReference type="PDB" id="7OYD"/>
    </source>
</evidence>
<feature type="chain" id="PRO_0000458231" description="Death-associated protein-like 1 homolog">
    <location>
        <begin position="1"/>
        <end position="109"/>
    </location>
</feature>
<feature type="region of interest" description="Disordered" evidence="1">
    <location>
        <begin position="1"/>
        <end position="51"/>
    </location>
</feature>
<feature type="region of interest" description="Disordered" evidence="1">
    <location>
        <begin position="76"/>
        <end position="100"/>
    </location>
</feature>
<feature type="compositionally biased region" description="Basic and acidic residues" evidence="1">
    <location>
        <begin position="31"/>
        <end position="50"/>
    </location>
</feature>
<protein>
    <recommendedName>
        <fullName>Death-associated protein-like 1 homolog</fullName>
    </recommendedName>
    <alternativeName>
        <fullName evidence="3">Death-associated protein 1b</fullName>
    </alternativeName>
</protein>
<organism>
    <name type="scientific">Danio rerio</name>
    <name type="common">Zebrafish</name>
    <name type="synonym">Brachydanio rerio</name>
    <dbReference type="NCBI Taxonomy" id="7955"/>
    <lineage>
        <taxon>Eukaryota</taxon>
        <taxon>Metazoa</taxon>
        <taxon>Chordata</taxon>
        <taxon>Craniata</taxon>
        <taxon>Vertebrata</taxon>
        <taxon>Euteleostomi</taxon>
        <taxon>Actinopterygii</taxon>
        <taxon>Neopterygii</taxon>
        <taxon>Teleostei</taxon>
        <taxon>Ostariophysi</taxon>
        <taxon>Cypriniformes</taxon>
        <taxon>Danionidae</taxon>
        <taxon>Danioninae</taxon>
        <taxon>Danio</taxon>
    </lineage>
</organism>
<gene>
    <name evidence="3 6" type="primary">dap1b</name>
    <name evidence="4" type="ORF">zgc:136540</name>
</gene>
<accession>Q9I9N0</accession>
<accession>A0A0R4IYW0</accession>
<accession>Q1RM22</accession>
<dbReference type="EMBL" id="CABZ01028255">
    <property type="status" value="NOT_ANNOTATED_CDS"/>
    <property type="molecule type" value="Genomic_DNA"/>
</dbReference>
<dbReference type="EMBL" id="CABZ01032452">
    <property type="status" value="NOT_ANNOTATED_CDS"/>
    <property type="molecule type" value="Genomic_DNA"/>
</dbReference>
<dbReference type="EMBL" id="AF231128">
    <property type="protein sequence ID" value="AAF66958.1"/>
    <property type="molecule type" value="mRNA"/>
</dbReference>
<dbReference type="EMBL" id="BC115168">
    <property type="protein sequence ID" value="AAI15169.1"/>
    <property type="molecule type" value="mRNA"/>
</dbReference>
<dbReference type="RefSeq" id="NP_571648.1">
    <property type="nucleotide sequence ID" value="NM_131573.2"/>
</dbReference>
<dbReference type="RefSeq" id="XP_017213204.1">
    <property type="nucleotide sequence ID" value="XM_017357715.3"/>
</dbReference>
<dbReference type="PDB" id="7OYA">
    <property type="method" value="EM"/>
    <property type="resolution" value="3.20 A"/>
    <property type="chains" value="s1=1-109"/>
</dbReference>
<dbReference type="PDB" id="7OYD">
    <property type="method" value="EM"/>
    <property type="resolution" value="2.30 A"/>
    <property type="chains" value="s1=1-109"/>
</dbReference>
<dbReference type="PDBsum" id="7OYA"/>
<dbReference type="PDBsum" id="7OYD"/>
<dbReference type="EMDB" id="EMD-13111"/>
<dbReference type="EMDB" id="EMD-13114"/>
<dbReference type="SMR" id="Q9I9N0"/>
<dbReference type="FunCoup" id="Q9I9N0">
    <property type="interactions" value="542"/>
</dbReference>
<dbReference type="STRING" id="7955.ENSDARP00000141912"/>
<dbReference type="Ensembl" id="ENSDART00000171721">
    <property type="protein sequence ID" value="ENSDARP00000141912"/>
    <property type="gene ID" value="ENSDARG00000086842"/>
</dbReference>
<dbReference type="GeneID" id="58094"/>
<dbReference type="KEGG" id="dre:101885164"/>
<dbReference type="KEGG" id="dre:58094"/>
<dbReference type="AGR" id="ZFIN:ZDB-GENE-000511-4"/>
<dbReference type="CTD" id="58094"/>
<dbReference type="ZFIN" id="ZDB-GENE-000511-4">
    <property type="gene designation" value="dap1b"/>
</dbReference>
<dbReference type="eggNOG" id="ENOG502S7Q6">
    <property type="taxonomic scope" value="Eukaryota"/>
</dbReference>
<dbReference type="HOGENOM" id="CLU_150759_1_0_1"/>
<dbReference type="InParanoid" id="Q9I9N0"/>
<dbReference type="OMA" id="PNRMQQV"/>
<dbReference type="PRO" id="PR:Q9I9N0"/>
<dbReference type="Proteomes" id="UP000000437">
    <property type="component" value="Chromosome 9"/>
</dbReference>
<dbReference type="Bgee" id="ENSDARG00000086842">
    <property type="expression patterns" value="Expressed in zone of skin and 22 other cell types or tissues"/>
</dbReference>
<dbReference type="GO" id="GO:0043022">
    <property type="term" value="F:ribosome binding"/>
    <property type="evidence" value="ECO:0000314"/>
    <property type="project" value="UniProtKB"/>
</dbReference>
<dbReference type="GO" id="GO:0031369">
    <property type="term" value="F:translation initiation factor binding"/>
    <property type="evidence" value="ECO:0000353"/>
    <property type="project" value="UniProtKB"/>
</dbReference>
<dbReference type="GO" id="GO:0030371">
    <property type="term" value="F:translation repressor activity"/>
    <property type="evidence" value="ECO:0000314"/>
    <property type="project" value="UniProtKB"/>
</dbReference>
<dbReference type="GO" id="GO:0097190">
    <property type="term" value="P:apoptotic signaling pathway"/>
    <property type="evidence" value="ECO:0000318"/>
    <property type="project" value="GO_Central"/>
</dbReference>
<dbReference type="GO" id="GO:0010507">
    <property type="term" value="P:negative regulation of autophagy"/>
    <property type="evidence" value="ECO:0000318"/>
    <property type="project" value="GO_Central"/>
</dbReference>
<dbReference type="GO" id="GO:0141014">
    <property type="term" value="P:ribosome hibernation"/>
    <property type="evidence" value="ECO:0000314"/>
    <property type="project" value="UniProtKB"/>
</dbReference>
<dbReference type="InterPro" id="IPR024130">
    <property type="entry name" value="DAP1/DAPL1"/>
</dbReference>
<dbReference type="PANTHER" id="PTHR13177">
    <property type="entry name" value="DEATH-ASSOCIATED PROTEIN 1"/>
    <property type="match status" value="1"/>
</dbReference>
<dbReference type="PANTHER" id="PTHR13177:SF2">
    <property type="entry name" value="DEATH-ASSOCIATED PROTEIN-LIKE 1"/>
    <property type="match status" value="1"/>
</dbReference>
<dbReference type="Pfam" id="PF15228">
    <property type="entry name" value="DAP"/>
    <property type="match status" value="1"/>
</dbReference>
<proteinExistence type="evidence at protein level"/>
<comment type="function">
    <text evidence="2">Ribosome-binding protein that promotes ribosome hibernation, a process during which ribosomes are stabilized in an inactive state and preserved from proteasomal degradation (PubMed:36653451). Acts via its association with eiF5a (eif5a and eif5a2) at the polypeptide exit tunnel of the ribosome, preventing mRNA translation (PubMed:36653451). Plays a key role in ribosome hibernation in the mature egg by preventing mRNA translation, leading to ribosome inactivation (PubMed:36653451). Ribosomes, which are produced in large quantities during oogenesis, are stored and translationally repressed in the egg and early embryo (PubMed:36653451).</text>
</comment>
<comment type="subunit">
    <text evidence="2">Associates with ribosomes; preventing translation (PubMed:36653451). Interacts with eiF5a (eif5a and eif5a2); preventing translation (PubMed:36653451).</text>
</comment>
<comment type="similarity">
    <text evidence="5">Belongs to the DAP-DAPL1 family.</text>
</comment>
<name>DAP1B_DANRE</name>
<keyword id="KW-0002">3D-structure</keyword>
<keyword id="KW-1185">Reference proteome</keyword>
<keyword id="KW-0810">Translation regulation</keyword>
<reference key="1">
    <citation type="journal article" date="2013" name="Nature">
        <title>The zebrafish reference genome sequence and its relationship to the human genome.</title>
        <authorList>
            <person name="Howe K."/>
            <person name="Clark M.D."/>
            <person name="Torroja C.F."/>
            <person name="Torrance J."/>
            <person name="Berthelot C."/>
            <person name="Muffato M."/>
            <person name="Collins J.E."/>
            <person name="Humphray S."/>
            <person name="McLaren K."/>
            <person name="Matthews L."/>
            <person name="McLaren S."/>
            <person name="Sealy I."/>
            <person name="Caccamo M."/>
            <person name="Churcher C."/>
            <person name="Scott C."/>
            <person name="Barrett J.C."/>
            <person name="Koch R."/>
            <person name="Rauch G.J."/>
            <person name="White S."/>
            <person name="Chow W."/>
            <person name="Kilian B."/>
            <person name="Quintais L.T."/>
            <person name="Guerra-Assuncao J.A."/>
            <person name="Zhou Y."/>
            <person name="Gu Y."/>
            <person name="Yen J."/>
            <person name="Vogel J.H."/>
            <person name="Eyre T."/>
            <person name="Redmond S."/>
            <person name="Banerjee R."/>
            <person name="Chi J."/>
            <person name="Fu B."/>
            <person name="Langley E."/>
            <person name="Maguire S.F."/>
            <person name="Laird G.K."/>
            <person name="Lloyd D."/>
            <person name="Kenyon E."/>
            <person name="Donaldson S."/>
            <person name="Sehra H."/>
            <person name="Almeida-King J."/>
            <person name="Loveland J."/>
            <person name="Trevanion S."/>
            <person name="Jones M."/>
            <person name="Quail M."/>
            <person name="Willey D."/>
            <person name="Hunt A."/>
            <person name="Burton J."/>
            <person name="Sims S."/>
            <person name="McLay K."/>
            <person name="Plumb B."/>
            <person name="Davis J."/>
            <person name="Clee C."/>
            <person name="Oliver K."/>
            <person name="Clark R."/>
            <person name="Riddle C."/>
            <person name="Elliot D."/>
            <person name="Threadgold G."/>
            <person name="Harden G."/>
            <person name="Ware D."/>
            <person name="Begum S."/>
            <person name="Mortimore B."/>
            <person name="Kerry G."/>
            <person name="Heath P."/>
            <person name="Phillimore B."/>
            <person name="Tracey A."/>
            <person name="Corby N."/>
            <person name="Dunn M."/>
            <person name="Johnson C."/>
            <person name="Wood J."/>
            <person name="Clark S."/>
            <person name="Pelan S."/>
            <person name="Griffiths G."/>
            <person name="Smith M."/>
            <person name="Glithero R."/>
            <person name="Howden P."/>
            <person name="Barker N."/>
            <person name="Lloyd C."/>
            <person name="Stevens C."/>
            <person name="Harley J."/>
            <person name="Holt K."/>
            <person name="Panagiotidis G."/>
            <person name="Lovell J."/>
            <person name="Beasley H."/>
            <person name="Henderson C."/>
            <person name="Gordon D."/>
            <person name="Auger K."/>
            <person name="Wright D."/>
            <person name="Collins J."/>
            <person name="Raisen C."/>
            <person name="Dyer L."/>
            <person name="Leung K."/>
            <person name="Robertson L."/>
            <person name="Ambridge K."/>
            <person name="Leongamornlert D."/>
            <person name="McGuire S."/>
            <person name="Gilderthorp R."/>
            <person name="Griffiths C."/>
            <person name="Manthravadi D."/>
            <person name="Nichol S."/>
            <person name="Barker G."/>
            <person name="Whitehead S."/>
            <person name="Kay M."/>
            <person name="Brown J."/>
            <person name="Murnane C."/>
            <person name="Gray E."/>
            <person name="Humphries M."/>
            <person name="Sycamore N."/>
            <person name="Barker D."/>
            <person name="Saunders D."/>
            <person name="Wallis J."/>
            <person name="Babbage A."/>
            <person name="Hammond S."/>
            <person name="Mashreghi-Mohammadi M."/>
            <person name="Barr L."/>
            <person name="Martin S."/>
            <person name="Wray P."/>
            <person name="Ellington A."/>
            <person name="Matthews N."/>
            <person name="Ellwood M."/>
            <person name="Woodmansey R."/>
            <person name="Clark G."/>
            <person name="Cooper J."/>
            <person name="Tromans A."/>
            <person name="Grafham D."/>
            <person name="Skuce C."/>
            <person name="Pandian R."/>
            <person name="Andrews R."/>
            <person name="Harrison E."/>
            <person name="Kimberley A."/>
            <person name="Garnett J."/>
            <person name="Fosker N."/>
            <person name="Hall R."/>
            <person name="Garner P."/>
            <person name="Kelly D."/>
            <person name="Bird C."/>
            <person name="Palmer S."/>
            <person name="Gehring I."/>
            <person name="Berger A."/>
            <person name="Dooley C.M."/>
            <person name="Ersan-Urun Z."/>
            <person name="Eser C."/>
            <person name="Geiger H."/>
            <person name="Geisler M."/>
            <person name="Karotki L."/>
            <person name="Kirn A."/>
            <person name="Konantz J."/>
            <person name="Konantz M."/>
            <person name="Oberlander M."/>
            <person name="Rudolph-Geiger S."/>
            <person name="Teucke M."/>
            <person name="Lanz C."/>
            <person name="Raddatz G."/>
            <person name="Osoegawa K."/>
            <person name="Zhu B."/>
            <person name="Rapp A."/>
            <person name="Widaa S."/>
            <person name="Langford C."/>
            <person name="Yang F."/>
            <person name="Schuster S.C."/>
            <person name="Carter N.P."/>
            <person name="Harrow J."/>
            <person name="Ning Z."/>
            <person name="Herrero J."/>
            <person name="Searle S.M."/>
            <person name="Enright A."/>
            <person name="Geisler R."/>
            <person name="Plasterk R.H."/>
            <person name="Lee C."/>
            <person name="Westerfield M."/>
            <person name="de Jong P.J."/>
            <person name="Zon L.I."/>
            <person name="Postlethwait J.H."/>
            <person name="Nusslein-Volhard C."/>
            <person name="Hubbard T.J."/>
            <person name="Roest Crollius H."/>
            <person name="Rogers J."/>
            <person name="Stemple D.L."/>
        </authorList>
    </citation>
    <scope>NUCLEOTIDE SEQUENCE [LARGE SCALE GENOMIC DNA]</scope>
    <source>
        <strain>Tuebingen</strain>
    </source>
</reference>
<reference key="2">
    <citation type="submission" date="2006-04" db="EMBL/GenBank/DDBJ databases">
        <authorList>
            <consortium name="NIH - Zebrafish Gene Collection (ZGC) project"/>
        </authorList>
    </citation>
    <scope>NUCLEOTIDE SEQUENCE [LARGE SCALE MRNA]</scope>
    <source>
        <tissue>Eye</tissue>
    </source>
</reference>
<reference evidence="7 8" key="3">
    <citation type="journal article" date="2023" name="Nature">
        <title>A molecular network of conserved factors keeps ribosomes dormant in the egg.</title>
        <authorList>
            <person name="Leesch F."/>
            <person name="Lorenzo-Orts L."/>
            <person name="Pribitzer C."/>
            <person name="Grishkovskaya I."/>
            <person name="Roehsner J."/>
            <person name="Chugunova A."/>
            <person name="Matzinger M."/>
            <person name="Roitinger E."/>
            <person name="Belacic K."/>
            <person name="Kandolf S."/>
            <person name="Lin T.Y."/>
            <person name="Mechtler K."/>
            <person name="Meinhart A."/>
            <person name="Haselbach D."/>
            <person name="Pauli A."/>
        </authorList>
    </citation>
    <scope>STRUCTURE BY ELECTRON MICROSCOPY (2.30 ANGSTROMS) IN COMPLEX WITH EIF5A AND RIBOSOME</scope>
    <scope>FUNCTION</scope>
    <scope>INTERACTION WITH EIF5A</scope>
    <scope>RIBOSOME-BINDING</scope>
</reference>
<sequence>MVQLSKTGVRDTLKAGHPPAVKAGGKRVVKKSADENANVEKETRKTDKPRSVLAPSRMQHLSLLLSGPLEKLGHDFPETPVSVRHSRVRPSVEKPHISRIPCIQQPRKF</sequence>